<organism>
    <name type="scientific">Brucella abortus (strain 2308)</name>
    <dbReference type="NCBI Taxonomy" id="359391"/>
    <lineage>
        <taxon>Bacteria</taxon>
        <taxon>Pseudomonadati</taxon>
        <taxon>Pseudomonadota</taxon>
        <taxon>Alphaproteobacteria</taxon>
        <taxon>Hyphomicrobiales</taxon>
        <taxon>Brucellaceae</taxon>
        <taxon>Brucella/Ochrobactrum group</taxon>
        <taxon>Brucella</taxon>
    </lineage>
</organism>
<accession>Q2YLF8</accession>
<gene>
    <name type="ordered locus">BAB1_1794</name>
</gene>
<evidence type="ECO:0000255" key="1"/>
<evidence type="ECO:0000305" key="2"/>
<reference key="1">
    <citation type="journal article" date="2005" name="Infect. Immun.">
        <title>Whole-genome analyses of speciation events in pathogenic Brucellae.</title>
        <authorList>
            <person name="Chain P.S."/>
            <person name="Comerci D.J."/>
            <person name="Tolmasky M.E."/>
            <person name="Larimer F.W."/>
            <person name="Malfatti S.A."/>
            <person name="Vergez L.M."/>
            <person name="Aguero F."/>
            <person name="Land M.L."/>
            <person name="Ugalde R.A."/>
            <person name="Garcia E."/>
        </authorList>
    </citation>
    <scope>NUCLEOTIDE SEQUENCE [LARGE SCALE GENOMIC DNA]</scope>
    <source>
        <strain>2308</strain>
    </source>
</reference>
<sequence length="371" mass="39397">MRKTLFSGVALAAVIAFGGSAWADVLVGIGIPVTGPNAVYGAQIQKGAEAAIKEVNDAGGINGEKIAITIGDDVSDPKQGISVANKFAADGVKFVIGHFNSGVTIPASQVYAENGILEISPGATNPQYTEQGLWNTFRTCGRDDQQGTVAGQYIFDHFKDAKIAVIHDKTPYGQGLADETKKKLNELGTKETLYEGVNVGEKDFSALIAKLKQAGVNVVYWGGMHPEAGLLIRQMADQGLKAQFISGDGIVSNELASIAGDAVAGVMNTFGPDPRDDKANAELIKAFRDKGFEPEAYTLYSYAAVQSLAQAAKAAGSNDPQEVAKAMKEKGPFKTVLGDLSYDEKGDPKLPGYVMYKWEKGADGKYNYIQQ</sequence>
<comment type="function">
    <text evidence="2">Component of an amino-acid transport system.</text>
</comment>
<comment type="similarity">
    <text evidence="2">Belongs to the leucine-binding protein family.</text>
</comment>
<proteinExistence type="inferred from homology"/>
<protein>
    <recommendedName>
        <fullName>Leu/Ile/Val-binding protein homolog 1</fullName>
    </recommendedName>
</protein>
<feature type="signal peptide" evidence="1">
    <location>
        <begin position="1"/>
        <end position="23"/>
    </location>
</feature>
<feature type="chain" id="PRO_0000282521" description="Leu/Ile/Val-binding protein homolog 1">
    <location>
        <begin position="24"/>
        <end position="371"/>
    </location>
</feature>
<keyword id="KW-0029">Amino-acid transport</keyword>
<keyword id="KW-1185">Reference proteome</keyword>
<keyword id="KW-0732">Signal</keyword>
<keyword id="KW-0813">Transport</keyword>
<name>LIVB1_BRUA2</name>
<dbReference type="EMBL" id="AM040264">
    <property type="protein sequence ID" value="CAJ11750.1"/>
    <property type="molecule type" value="Genomic_DNA"/>
</dbReference>
<dbReference type="RefSeq" id="WP_002966965.1">
    <property type="nucleotide sequence ID" value="NZ_KN046823.1"/>
</dbReference>
<dbReference type="SMR" id="Q2YLF8"/>
<dbReference type="STRING" id="359391.BAB1_1794"/>
<dbReference type="KEGG" id="bmf:BAB1_1794"/>
<dbReference type="PATRIC" id="fig|359391.11.peg.305"/>
<dbReference type="HOGENOM" id="CLU_027128_6_0_5"/>
<dbReference type="PhylomeDB" id="Q2YLF8"/>
<dbReference type="Proteomes" id="UP000002719">
    <property type="component" value="Chromosome I"/>
</dbReference>
<dbReference type="GO" id="GO:0006865">
    <property type="term" value="P:amino acid transport"/>
    <property type="evidence" value="ECO:0007669"/>
    <property type="project" value="UniProtKB-KW"/>
</dbReference>
<dbReference type="CDD" id="cd06342">
    <property type="entry name" value="PBP1_ABC_LIVBP-like"/>
    <property type="match status" value="1"/>
</dbReference>
<dbReference type="Gene3D" id="3.40.50.2300">
    <property type="match status" value="2"/>
</dbReference>
<dbReference type="InterPro" id="IPR028081">
    <property type="entry name" value="Leu-bd"/>
</dbReference>
<dbReference type="InterPro" id="IPR000709">
    <property type="entry name" value="Leu_Ile_Val-bd"/>
</dbReference>
<dbReference type="InterPro" id="IPR028082">
    <property type="entry name" value="Peripla_BP_I"/>
</dbReference>
<dbReference type="PANTHER" id="PTHR47151:SF2">
    <property type="entry name" value="AMINO ACID BINDING PROTEIN"/>
    <property type="match status" value="1"/>
</dbReference>
<dbReference type="PANTHER" id="PTHR47151">
    <property type="entry name" value="LEU/ILE/VAL-BINDING ABC TRANSPORTER SUBUNIT"/>
    <property type="match status" value="1"/>
</dbReference>
<dbReference type="Pfam" id="PF13458">
    <property type="entry name" value="Peripla_BP_6"/>
    <property type="match status" value="1"/>
</dbReference>
<dbReference type="PRINTS" id="PR00337">
    <property type="entry name" value="LEUILEVALBP"/>
</dbReference>
<dbReference type="SUPFAM" id="SSF53822">
    <property type="entry name" value="Periplasmic binding protein-like I"/>
    <property type="match status" value="1"/>
</dbReference>